<reference key="1">
    <citation type="journal article" date="1996" name="DNA Res.">
        <title>Sequence analysis of the genome of the unicellular cyanobacterium Synechocystis sp. strain PCC6803. II. Sequence determination of the entire genome and assignment of potential protein-coding regions.</title>
        <authorList>
            <person name="Kaneko T."/>
            <person name="Sato S."/>
            <person name="Kotani H."/>
            <person name="Tanaka A."/>
            <person name="Asamizu E."/>
            <person name="Nakamura Y."/>
            <person name="Miyajima N."/>
            <person name="Hirosawa M."/>
            <person name="Sugiura M."/>
            <person name="Sasamoto S."/>
            <person name="Kimura T."/>
            <person name="Hosouchi T."/>
            <person name="Matsuno A."/>
            <person name="Muraki A."/>
            <person name="Nakazaki N."/>
            <person name="Naruo K."/>
            <person name="Okumura S."/>
            <person name="Shimpo S."/>
            <person name="Takeuchi C."/>
            <person name="Wada T."/>
            <person name="Watanabe A."/>
            <person name="Yamada M."/>
            <person name="Yasuda M."/>
            <person name="Tabata S."/>
        </authorList>
    </citation>
    <scope>NUCLEOTIDE SEQUENCE [LARGE SCALE GENOMIC DNA]</scope>
    <source>
        <strain>ATCC 27184 / PCC 6803 / Kazusa</strain>
    </source>
</reference>
<protein>
    <recommendedName>
        <fullName>Rubredoxin</fullName>
        <shortName>Rd</shortName>
    </recommendedName>
</protein>
<accession>P73068</accession>
<feature type="chain" id="PRO_0000135053" description="Rubredoxin">
    <location>
        <begin position="1"/>
        <end position="115"/>
    </location>
</feature>
<feature type="domain" description="Rubredoxin-like" evidence="2">
    <location>
        <begin position="15"/>
        <end position="66"/>
    </location>
</feature>
<feature type="binding site" evidence="2">
    <location>
        <position position="20"/>
    </location>
    <ligand>
        <name>Fe cation</name>
        <dbReference type="ChEBI" id="CHEBI:24875"/>
    </ligand>
</feature>
<feature type="binding site" evidence="2">
    <location>
        <position position="23"/>
    </location>
    <ligand>
        <name>Fe cation</name>
        <dbReference type="ChEBI" id="CHEBI:24875"/>
    </ligand>
</feature>
<feature type="binding site" evidence="2">
    <location>
        <position position="53"/>
    </location>
    <ligand>
        <name>Fe cation</name>
        <dbReference type="ChEBI" id="CHEBI:24875"/>
    </ligand>
</feature>
<feature type="binding site" evidence="2">
    <location>
        <position position="56"/>
    </location>
    <ligand>
        <name>Fe cation</name>
        <dbReference type="ChEBI" id="CHEBI:24875"/>
    </ligand>
</feature>
<evidence type="ECO:0000250" key="1"/>
<evidence type="ECO:0000255" key="2">
    <source>
        <dbReference type="PROSITE-ProRule" id="PRU00241"/>
    </source>
</evidence>
<evidence type="ECO:0000305" key="3"/>
<organism>
    <name type="scientific">Synechocystis sp. (strain ATCC 27184 / PCC 6803 / Kazusa)</name>
    <dbReference type="NCBI Taxonomy" id="1111708"/>
    <lineage>
        <taxon>Bacteria</taxon>
        <taxon>Bacillati</taxon>
        <taxon>Cyanobacteriota</taxon>
        <taxon>Cyanophyceae</taxon>
        <taxon>Synechococcales</taxon>
        <taxon>Merismopediaceae</taxon>
        <taxon>Synechocystis</taxon>
    </lineage>
</organism>
<comment type="function">
    <text evidence="1">Rubredoxin is a small nonheme, iron protein lacking acid-labile sulfide. Its single Fe, chelated to 4 Cys, functions as an electron acceptor and may also stabilize the conformation of the molecule. Could be involved in hydrogenase-linked redox processes (By similarity).</text>
</comment>
<comment type="cofactor">
    <cofactor evidence="1">
        <name>Fe(3+)</name>
        <dbReference type="ChEBI" id="CHEBI:29034"/>
    </cofactor>
    <text evidence="1">Binds 1 Fe(3+) ion per subunit.</text>
</comment>
<comment type="similarity">
    <text evidence="3">Belongs to the rubredoxin family.</text>
</comment>
<name>RUBR_SYNY3</name>
<proteinExistence type="inferred from homology"/>
<sequence length="115" mass="12570">MSERPPEKTLAELASPNHECRACGYVYIPSQGDQKTSVSPGTPFEALPLNWKCPVCGAPRNYFISTGETDAPSGFAENLNYGFGFNRMSGGKKNLLIFGSLFVIFLFFLSLYGMG</sequence>
<dbReference type="EMBL" id="BA000022">
    <property type="protein sequence ID" value="BAA17090.1"/>
    <property type="molecule type" value="Genomic_DNA"/>
</dbReference>
<dbReference type="PIR" id="S75176">
    <property type="entry name" value="S75176"/>
</dbReference>
<dbReference type="SMR" id="P73068"/>
<dbReference type="IntAct" id="P73068">
    <property type="interactions" value="4"/>
</dbReference>
<dbReference type="STRING" id="1148.gene:10497951"/>
<dbReference type="PaxDb" id="1148-1652166"/>
<dbReference type="EnsemblBacteria" id="BAA17090">
    <property type="protein sequence ID" value="BAA17090"/>
    <property type="gene ID" value="BAA17090"/>
</dbReference>
<dbReference type="KEGG" id="syn:slr2033"/>
<dbReference type="eggNOG" id="COG1773">
    <property type="taxonomic scope" value="Bacteria"/>
</dbReference>
<dbReference type="InParanoid" id="P73068"/>
<dbReference type="PhylomeDB" id="P73068"/>
<dbReference type="Proteomes" id="UP000001425">
    <property type="component" value="Chromosome"/>
</dbReference>
<dbReference type="GO" id="GO:0005506">
    <property type="term" value="F:iron ion binding"/>
    <property type="evidence" value="ECO:0007669"/>
    <property type="project" value="InterPro"/>
</dbReference>
<dbReference type="CDD" id="cd00730">
    <property type="entry name" value="rubredoxin"/>
    <property type="match status" value="1"/>
</dbReference>
<dbReference type="Gene3D" id="2.20.28.10">
    <property type="match status" value="1"/>
</dbReference>
<dbReference type="InterPro" id="IPR024934">
    <property type="entry name" value="Rubredoxin-like_dom"/>
</dbReference>
<dbReference type="InterPro" id="IPR024935">
    <property type="entry name" value="Rubredoxin_dom"/>
</dbReference>
<dbReference type="InterPro" id="IPR050526">
    <property type="entry name" value="Rubredoxin_ET"/>
</dbReference>
<dbReference type="InterPro" id="IPR018527">
    <property type="entry name" value="Rubredoxin_Fe_BS"/>
</dbReference>
<dbReference type="PANTHER" id="PTHR47627">
    <property type="entry name" value="RUBREDOXIN"/>
    <property type="match status" value="1"/>
</dbReference>
<dbReference type="PANTHER" id="PTHR47627:SF1">
    <property type="entry name" value="RUBREDOXIN-1-RELATED"/>
    <property type="match status" value="1"/>
</dbReference>
<dbReference type="Pfam" id="PF00301">
    <property type="entry name" value="Rubredoxin"/>
    <property type="match status" value="1"/>
</dbReference>
<dbReference type="PRINTS" id="PR00163">
    <property type="entry name" value="RUBREDOXIN"/>
</dbReference>
<dbReference type="SUPFAM" id="SSF57802">
    <property type="entry name" value="Rubredoxin-like"/>
    <property type="match status" value="1"/>
</dbReference>
<dbReference type="PROSITE" id="PS00202">
    <property type="entry name" value="RUBREDOXIN"/>
    <property type="match status" value="1"/>
</dbReference>
<dbReference type="PROSITE" id="PS50903">
    <property type="entry name" value="RUBREDOXIN_LIKE"/>
    <property type="match status" value="1"/>
</dbReference>
<keyword id="KW-0249">Electron transport</keyword>
<keyword id="KW-0408">Iron</keyword>
<keyword id="KW-0479">Metal-binding</keyword>
<keyword id="KW-1185">Reference proteome</keyword>
<keyword id="KW-0813">Transport</keyword>
<gene>
    <name type="primary">rub</name>
    <name type="ordered locus">slr2033</name>
</gene>